<keyword id="KW-1185">Reference proteome</keyword>
<feature type="chain" id="PRO_0000313630" description="Storkhead-box protein 2">
    <location>
        <begin position="1"/>
        <end position="926"/>
    </location>
</feature>
<feature type="region of interest" description="Disordered" evidence="1">
    <location>
        <begin position="1"/>
        <end position="32"/>
    </location>
</feature>
<feature type="region of interest" description="Disordered" evidence="1">
    <location>
        <begin position="338"/>
        <end position="394"/>
    </location>
</feature>
<feature type="region of interest" description="Disordered" evidence="1">
    <location>
        <begin position="452"/>
        <end position="529"/>
    </location>
</feature>
<feature type="region of interest" description="Disordered" evidence="1">
    <location>
        <begin position="632"/>
        <end position="693"/>
    </location>
</feature>
<feature type="region of interest" description="Disordered" evidence="1">
    <location>
        <begin position="724"/>
        <end position="803"/>
    </location>
</feature>
<feature type="region of interest" description="Disordered" evidence="1">
    <location>
        <begin position="825"/>
        <end position="926"/>
    </location>
</feature>
<feature type="compositionally biased region" description="Basic and acidic residues" evidence="1">
    <location>
        <begin position="18"/>
        <end position="32"/>
    </location>
</feature>
<feature type="compositionally biased region" description="Basic residues" evidence="1">
    <location>
        <begin position="353"/>
        <end position="378"/>
    </location>
</feature>
<feature type="compositionally biased region" description="Basic and acidic residues" evidence="1">
    <location>
        <begin position="379"/>
        <end position="394"/>
    </location>
</feature>
<feature type="compositionally biased region" description="Basic residues" evidence="1">
    <location>
        <begin position="463"/>
        <end position="472"/>
    </location>
</feature>
<feature type="compositionally biased region" description="Basic and acidic residues" evidence="1">
    <location>
        <begin position="473"/>
        <end position="495"/>
    </location>
</feature>
<feature type="compositionally biased region" description="Polar residues" evidence="1">
    <location>
        <begin position="518"/>
        <end position="529"/>
    </location>
</feature>
<feature type="compositionally biased region" description="Basic and acidic residues" evidence="1">
    <location>
        <begin position="632"/>
        <end position="658"/>
    </location>
</feature>
<feature type="compositionally biased region" description="Basic and acidic residues" evidence="1">
    <location>
        <begin position="684"/>
        <end position="693"/>
    </location>
</feature>
<feature type="compositionally biased region" description="Polar residues" evidence="1">
    <location>
        <begin position="746"/>
        <end position="772"/>
    </location>
</feature>
<feature type="compositionally biased region" description="Basic and acidic residues" evidence="1">
    <location>
        <begin position="785"/>
        <end position="799"/>
    </location>
</feature>
<feature type="compositionally biased region" description="Polar residues" evidence="1">
    <location>
        <begin position="847"/>
        <end position="884"/>
    </location>
</feature>
<feature type="compositionally biased region" description="Polar residues" evidence="1">
    <location>
        <begin position="914"/>
        <end position="926"/>
    </location>
</feature>
<accession>Q95K63</accession>
<sequence>MKKTRSTTLRRAWPSSDFSDRASDRMRSRSEKDYRLHKRFPAAFAPQASRGYMTSGDVSPISMSPISQSQFIPLGEILCLAISAMNSARKPVTQEALMEHLTTCFPGVPTPSQEILRHTLNTLVRERKIYPTPDGYFIVTPQTYFITPSLIRTNSKWYHLDERIPDRSQCTSPQPGTITPSASGCVRERTLPRNHCDSCHCCREDVHSTHAPTLQRKSAKDCKDPYCPPSLCQVPPTEKSKSTVNFSYKTETLSKPKDSEKQSKKFGLKLFRLSFKKDKTKQLANFSAQFPPEEWPLRDEDTPATIPREVEMEIIRRINPDLTVENVMRHTALMKKLEEEKAQRSKAGSSAHHSGRSKKSRTHRKSHGKSRSHSKTRVSKGDPSDGSHLDIPGGREYDFCDPLSRVPREGCFLIEHKGDNFIMHSNTNVLESHFPMTPEWDVSGELAKRRTEMPFPEPSRGSSHSKVHRSHSHTQDRRSRNERSNKAKERSRSMDNSKGPLGASSLGTPEDLAEGCSQDDQTPSQSYVDDSTLRPAQTVGHQRAHIASTSYKEVCIPEIVSGSKEPSSACSLLEPGKPPESLPSYGELNSCPTKTATDDYFQCNTSSETVLTAPSPLGKNKEDHDTLTLAEGVKKLSPSDRQVPHSSREPVGHKEESPKGPGGGPAASGGVAEGIANGRLVQHHGAEPSSLDKRKEIFSKDTLFKPLHSTLSVNSYHKSSLSLLKSHPKTPADTLPGRCEKLEPSLGTSAAQATPASQRQQESGGNQETSFDYYNVSDDDESEEGANKNTEEEKNREDVGTMQWLLEREKERDLQRKFEKNLTLLAPKETDSSSNQRATHSARLDSMDSSSITVDSGFNSPRTRESLASNTSSIVESNRRQNPALSPAHGGAGPAFNFRASADPPTNEAEKLQKPSNCLQASVTSV</sequence>
<evidence type="ECO:0000256" key="1">
    <source>
        <dbReference type="SAM" id="MobiDB-lite"/>
    </source>
</evidence>
<gene>
    <name type="primary">STOX2</name>
    <name type="ORF">QmoA-11510</name>
</gene>
<proteinExistence type="evidence at transcript level"/>
<name>STOX2_MACFA</name>
<organism>
    <name type="scientific">Macaca fascicularis</name>
    <name type="common">Crab-eating macaque</name>
    <name type="synonym">Cynomolgus monkey</name>
    <dbReference type="NCBI Taxonomy" id="9541"/>
    <lineage>
        <taxon>Eukaryota</taxon>
        <taxon>Metazoa</taxon>
        <taxon>Chordata</taxon>
        <taxon>Craniata</taxon>
        <taxon>Vertebrata</taxon>
        <taxon>Euteleostomi</taxon>
        <taxon>Mammalia</taxon>
        <taxon>Eutheria</taxon>
        <taxon>Euarchontoglires</taxon>
        <taxon>Primates</taxon>
        <taxon>Haplorrhini</taxon>
        <taxon>Catarrhini</taxon>
        <taxon>Cercopithecidae</taxon>
        <taxon>Cercopithecinae</taxon>
        <taxon>Macaca</taxon>
    </lineage>
</organism>
<reference key="1">
    <citation type="submission" date="2001-07" db="EMBL/GenBank/DDBJ databases">
        <title>Isolation of full-length cDNA clones from macaque brain cDNA libraries.</title>
        <authorList>
            <person name="Osada N."/>
            <person name="Hida M."/>
            <person name="Kusuda J."/>
            <person name="Tanuma R."/>
            <person name="Iseki K."/>
            <person name="Hirai M."/>
            <person name="Terao K."/>
            <person name="Suzuki Y."/>
            <person name="Sugano S."/>
            <person name="Hashimoto K."/>
        </authorList>
    </citation>
    <scope>NUCLEOTIDE SEQUENCE [LARGE SCALE MRNA]</scope>
    <source>
        <tissue>Medulla oblongata</tissue>
    </source>
</reference>
<protein>
    <recommendedName>
        <fullName>Storkhead-box protein 2</fullName>
    </recommendedName>
</protein>
<dbReference type="EMBL" id="AB066526">
    <property type="protein sequence ID" value="BAB62204.1"/>
    <property type="molecule type" value="mRNA"/>
</dbReference>
<dbReference type="RefSeq" id="NP_001306530.1">
    <property type="nucleotide sequence ID" value="NM_001319601.1"/>
</dbReference>
<dbReference type="STRING" id="9541.ENSMFAP00000025800"/>
<dbReference type="eggNOG" id="KOG3897">
    <property type="taxonomic scope" value="Eukaryota"/>
</dbReference>
<dbReference type="Proteomes" id="UP000233100">
    <property type="component" value="Unplaced"/>
</dbReference>
<dbReference type="GO" id="GO:0005737">
    <property type="term" value="C:cytoplasm"/>
    <property type="evidence" value="ECO:0007669"/>
    <property type="project" value="TreeGrafter"/>
</dbReference>
<dbReference type="GO" id="GO:0005634">
    <property type="term" value="C:nucleus"/>
    <property type="evidence" value="ECO:0007669"/>
    <property type="project" value="TreeGrafter"/>
</dbReference>
<dbReference type="GO" id="GO:0000977">
    <property type="term" value="F:RNA polymerase II transcription regulatory region sequence-specific DNA binding"/>
    <property type="evidence" value="ECO:0007669"/>
    <property type="project" value="TreeGrafter"/>
</dbReference>
<dbReference type="GO" id="GO:0009792">
    <property type="term" value="P:embryo development ending in birth or egg hatching"/>
    <property type="evidence" value="ECO:0000250"/>
    <property type="project" value="UniProtKB"/>
</dbReference>
<dbReference type="GO" id="GO:0001893">
    <property type="term" value="P:maternal placenta development"/>
    <property type="evidence" value="ECO:0000250"/>
    <property type="project" value="UniProtKB"/>
</dbReference>
<dbReference type="GO" id="GO:0006357">
    <property type="term" value="P:regulation of transcription by RNA polymerase II"/>
    <property type="evidence" value="ECO:0007669"/>
    <property type="project" value="InterPro"/>
</dbReference>
<dbReference type="InterPro" id="IPR019391">
    <property type="entry name" value="Storkhead-box_winged-helix"/>
</dbReference>
<dbReference type="InterPro" id="IPR040126">
    <property type="entry name" value="STOX1/2"/>
</dbReference>
<dbReference type="PANTHER" id="PTHR22437:SF2">
    <property type="entry name" value="STORKHEAD-BOX PROTEIN 2"/>
    <property type="match status" value="1"/>
</dbReference>
<dbReference type="PANTHER" id="PTHR22437">
    <property type="entry name" value="WINGED HELIX DOMAIN-CONTAINING PROTEIN"/>
    <property type="match status" value="1"/>
</dbReference>
<dbReference type="Pfam" id="PF10264">
    <property type="entry name" value="Stork_head"/>
    <property type="match status" value="1"/>
</dbReference>